<sequence length="315" mass="34200">MSQSLRIVFAGTPDFAARHLAALLSSEHEIIAVYTQPERPAGRGKKLTASPVKTLALEHNVPVYQPENFKSDESKQQLAALNADLMVVVAYGLLLPKVVLDTPKLGCINVHGSILPRWRGAAPIQRSIWAGDSETGVTIMQMDVGLDTGDMLKIATLPIEASDTSASMYDKLAELGPQALLECLQDIAQGTAVAVKQDDGLANYAHKLSKEEARINWSDAATHIERCIRAFNPWPMSHFEVAENSIKVWQARVETRAVTQTPGTIIQADKSGIYVATGQDVLVLESLQIPGKKALPVQDILNARADWFSVGSQLS</sequence>
<proteinExistence type="inferred from homology"/>
<organism>
    <name type="scientific">Vibrio cholerae serotype O1 (strain ATCC 39541 / Classical Ogawa 395 / O395)</name>
    <dbReference type="NCBI Taxonomy" id="345073"/>
    <lineage>
        <taxon>Bacteria</taxon>
        <taxon>Pseudomonadati</taxon>
        <taxon>Pseudomonadota</taxon>
        <taxon>Gammaproteobacteria</taxon>
        <taxon>Vibrionales</taxon>
        <taxon>Vibrionaceae</taxon>
        <taxon>Vibrio</taxon>
    </lineage>
</organism>
<feature type="chain" id="PRO_1000071664" description="Methionyl-tRNA formyltransferase">
    <location>
        <begin position="1"/>
        <end position="315"/>
    </location>
</feature>
<feature type="binding site" evidence="1">
    <location>
        <begin position="113"/>
        <end position="116"/>
    </location>
    <ligand>
        <name>(6S)-5,6,7,8-tetrahydrofolate</name>
        <dbReference type="ChEBI" id="CHEBI:57453"/>
    </ligand>
</feature>
<accession>A5F4B4</accession>
<accession>C3M2J8</accession>
<gene>
    <name evidence="1" type="primary">fmt</name>
    <name type="ordered locus">VC0395_A2474</name>
    <name type="ordered locus">VC395_0135</name>
</gene>
<comment type="function">
    <text evidence="1">Attaches a formyl group to the free amino group of methionyl-tRNA(fMet). The formyl group appears to play a dual role in the initiator identity of N-formylmethionyl-tRNA by promoting its recognition by IF2 and preventing the misappropriation of this tRNA by the elongation apparatus.</text>
</comment>
<comment type="catalytic activity">
    <reaction evidence="1">
        <text>L-methionyl-tRNA(fMet) + (6R)-10-formyltetrahydrofolate = N-formyl-L-methionyl-tRNA(fMet) + (6S)-5,6,7,8-tetrahydrofolate + H(+)</text>
        <dbReference type="Rhea" id="RHEA:24380"/>
        <dbReference type="Rhea" id="RHEA-COMP:9952"/>
        <dbReference type="Rhea" id="RHEA-COMP:9953"/>
        <dbReference type="ChEBI" id="CHEBI:15378"/>
        <dbReference type="ChEBI" id="CHEBI:57453"/>
        <dbReference type="ChEBI" id="CHEBI:78530"/>
        <dbReference type="ChEBI" id="CHEBI:78844"/>
        <dbReference type="ChEBI" id="CHEBI:195366"/>
        <dbReference type="EC" id="2.1.2.9"/>
    </reaction>
</comment>
<comment type="similarity">
    <text evidence="1">Belongs to the Fmt family.</text>
</comment>
<dbReference type="EC" id="2.1.2.9" evidence="1"/>
<dbReference type="EMBL" id="CP000627">
    <property type="protein sequence ID" value="ABQ19702.1"/>
    <property type="molecule type" value="Genomic_DNA"/>
</dbReference>
<dbReference type="EMBL" id="CP001235">
    <property type="protein sequence ID" value="ACP08162.1"/>
    <property type="molecule type" value="Genomic_DNA"/>
</dbReference>
<dbReference type="RefSeq" id="WP_000083540.1">
    <property type="nucleotide sequence ID" value="NZ_JAACZH010000018.1"/>
</dbReference>
<dbReference type="SMR" id="A5F4B4"/>
<dbReference type="KEGG" id="vco:VC0395_A2474"/>
<dbReference type="KEGG" id="vcr:VC395_0135"/>
<dbReference type="PATRIC" id="fig|345073.21.peg.126"/>
<dbReference type="eggNOG" id="COG0223">
    <property type="taxonomic scope" value="Bacteria"/>
</dbReference>
<dbReference type="HOGENOM" id="CLU_033347_1_2_6"/>
<dbReference type="OrthoDB" id="9802815at2"/>
<dbReference type="Proteomes" id="UP000000249">
    <property type="component" value="Chromosome 2"/>
</dbReference>
<dbReference type="GO" id="GO:0005829">
    <property type="term" value="C:cytosol"/>
    <property type="evidence" value="ECO:0007669"/>
    <property type="project" value="TreeGrafter"/>
</dbReference>
<dbReference type="GO" id="GO:0004479">
    <property type="term" value="F:methionyl-tRNA formyltransferase activity"/>
    <property type="evidence" value="ECO:0007669"/>
    <property type="project" value="UniProtKB-UniRule"/>
</dbReference>
<dbReference type="CDD" id="cd08646">
    <property type="entry name" value="FMT_core_Met-tRNA-FMT_N"/>
    <property type="match status" value="1"/>
</dbReference>
<dbReference type="CDD" id="cd08704">
    <property type="entry name" value="Met_tRNA_FMT_C"/>
    <property type="match status" value="1"/>
</dbReference>
<dbReference type="FunFam" id="3.10.25.10:FF:000012">
    <property type="entry name" value="Methionyl-tRNA formyltransferase"/>
    <property type="match status" value="1"/>
</dbReference>
<dbReference type="FunFam" id="3.40.50.12230:FF:000001">
    <property type="entry name" value="Methionyl-tRNA formyltransferase"/>
    <property type="match status" value="1"/>
</dbReference>
<dbReference type="FunFam" id="3.40.50.170:FF:000003">
    <property type="entry name" value="Methionyl-tRNA formyltransferase"/>
    <property type="match status" value="1"/>
</dbReference>
<dbReference type="Gene3D" id="3.10.25.10">
    <property type="entry name" value="Formyl transferase, C-terminal domain"/>
    <property type="match status" value="1"/>
</dbReference>
<dbReference type="Gene3D" id="3.40.50.170">
    <property type="entry name" value="Formyl transferase, N-terminal domain"/>
    <property type="match status" value="1"/>
</dbReference>
<dbReference type="HAMAP" id="MF_00182">
    <property type="entry name" value="Formyl_trans"/>
    <property type="match status" value="1"/>
</dbReference>
<dbReference type="InterPro" id="IPR005794">
    <property type="entry name" value="Fmt"/>
</dbReference>
<dbReference type="InterPro" id="IPR005793">
    <property type="entry name" value="Formyl_trans_C"/>
</dbReference>
<dbReference type="InterPro" id="IPR037022">
    <property type="entry name" value="Formyl_trans_C_sf"/>
</dbReference>
<dbReference type="InterPro" id="IPR002376">
    <property type="entry name" value="Formyl_transf_N"/>
</dbReference>
<dbReference type="InterPro" id="IPR036477">
    <property type="entry name" value="Formyl_transf_N_sf"/>
</dbReference>
<dbReference type="InterPro" id="IPR011034">
    <property type="entry name" value="Formyl_transferase-like_C_sf"/>
</dbReference>
<dbReference type="InterPro" id="IPR001555">
    <property type="entry name" value="GART_AS"/>
</dbReference>
<dbReference type="InterPro" id="IPR044135">
    <property type="entry name" value="Met-tRNA-FMT_C"/>
</dbReference>
<dbReference type="InterPro" id="IPR041711">
    <property type="entry name" value="Met-tRNA-FMT_N"/>
</dbReference>
<dbReference type="NCBIfam" id="TIGR00460">
    <property type="entry name" value="fmt"/>
    <property type="match status" value="1"/>
</dbReference>
<dbReference type="PANTHER" id="PTHR11138">
    <property type="entry name" value="METHIONYL-TRNA FORMYLTRANSFERASE"/>
    <property type="match status" value="1"/>
</dbReference>
<dbReference type="PANTHER" id="PTHR11138:SF5">
    <property type="entry name" value="METHIONYL-TRNA FORMYLTRANSFERASE, MITOCHONDRIAL"/>
    <property type="match status" value="1"/>
</dbReference>
<dbReference type="Pfam" id="PF02911">
    <property type="entry name" value="Formyl_trans_C"/>
    <property type="match status" value="1"/>
</dbReference>
<dbReference type="Pfam" id="PF00551">
    <property type="entry name" value="Formyl_trans_N"/>
    <property type="match status" value="1"/>
</dbReference>
<dbReference type="SUPFAM" id="SSF50486">
    <property type="entry name" value="FMT C-terminal domain-like"/>
    <property type="match status" value="1"/>
</dbReference>
<dbReference type="SUPFAM" id="SSF53328">
    <property type="entry name" value="Formyltransferase"/>
    <property type="match status" value="1"/>
</dbReference>
<dbReference type="PROSITE" id="PS00373">
    <property type="entry name" value="GART"/>
    <property type="match status" value="1"/>
</dbReference>
<reference key="1">
    <citation type="submission" date="2007-03" db="EMBL/GenBank/DDBJ databases">
        <authorList>
            <person name="Heidelberg J."/>
        </authorList>
    </citation>
    <scope>NUCLEOTIDE SEQUENCE [LARGE SCALE GENOMIC DNA]</scope>
    <source>
        <strain>ATCC 39541 / Classical Ogawa 395 / O395</strain>
    </source>
</reference>
<reference key="2">
    <citation type="journal article" date="2008" name="PLoS ONE">
        <title>A recalibrated molecular clock and independent origins for the cholera pandemic clones.</title>
        <authorList>
            <person name="Feng L."/>
            <person name="Reeves P.R."/>
            <person name="Lan R."/>
            <person name="Ren Y."/>
            <person name="Gao C."/>
            <person name="Zhou Z."/>
            <person name="Ren Y."/>
            <person name="Cheng J."/>
            <person name="Wang W."/>
            <person name="Wang J."/>
            <person name="Qian W."/>
            <person name="Li D."/>
            <person name="Wang L."/>
        </authorList>
    </citation>
    <scope>NUCLEOTIDE SEQUENCE [LARGE SCALE GENOMIC DNA]</scope>
    <source>
        <strain>ATCC 39541 / Classical Ogawa 395 / O395</strain>
    </source>
</reference>
<name>FMT_VIBC3</name>
<protein>
    <recommendedName>
        <fullName evidence="1">Methionyl-tRNA formyltransferase</fullName>
        <ecNumber evidence="1">2.1.2.9</ecNumber>
    </recommendedName>
</protein>
<evidence type="ECO:0000255" key="1">
    <source>
        <dbReference type="HAMAP-Rule" id="MF_00182"/>
    </source>
</evidence>
<keyword id="KW-0648">Protein biosynthesis</keyword>
<keyword id="KW-0808">Transferase</keyword>